<proteinExistence type="inferred from homology"/>
<evidence type="ECO:0000250" key="1">
    <source>
        <dbReference type="UniProtKB" id="P00128"/>
    </source>
</evidence>
<evidence type="ECO:0000305" key="2"/>
<organism>
    <name type="scientific">Candida glabrata (strain ATCC 2001 / BCRC 20586 / JCM 3761 / NBRC 0622 / NRRL Y-65 / CBS 138)</name>
    <name type="common">Yeast</name>
    <name type="synonym">Nakaseomyces glabratus</name>
    <dbReference type="NCBI Taxonomy" id="284593"/>
    <lineage>
        <taxon>Eukaryota</taxon>
        <taxon>Fungi</taxon>
        <taxon>Dikarya</taxon>
        <taxon>Ascomycota</taxon>
        <taxon>Saccharomycotina</taxon>
        <taxon>Saccharomycetes</taxon>
        <taxon>Saccharomycetales</taxon>
        <taxon>Saccharomycetaceae</taxon>
        <taxon>Nakaseomyces</taxon>
    </lineage>
</organism>
<sequence>MPQSFTSIAKIGDFILKTPLLSKICVPVSKQYIKYSGYRKLGLRFDDLIAEENPIMQTALKRLPEGESYARNYRIIRAHQSELTKHLLPRNEWVKAQDDVPYLLPYILEAEAAAKEKEDLDNLELSKK</sequence>
<reference key="1">
    <citation type="journal article" date="2004" name="Nature">
        <title>Genome evolution in yeasts.</title>
        <authorList>
            <person name="Dujon B."/>
            <person name="Sherman D."/>
            <person name="Fischer G."/>
            <person name="Durrens P."/>
            <person name="Casaregola S."/>
            <person name="Lafontaine I."/>
            <person name="de Montigny J."/>
            <person name="Marck C."/>
            <person name="Neuveglise C."/>
            <person name="Talla E."/>
            <person name="Goffard N."/>
            <person name="Frangeul L."/>
            <person name="Aigle M."/>
            <person name="Anthouard V."/>
            <person name="Babour A."/>
            <person name="Barbe V."/>
            <person name="Barnay S."/>
            <person name="Blanchin S."/>
            <person name="Beckerich J.-M."/>
            <person name="Beyne E."/>
            <person name="Bleykasten C."/>
            <person name="Boisrame A."/>
            <person name="Boyer J."/>
            <person name="Cattolico L."/>
            <person name="Confanioleri F."/>
            <person name="de Daruvar A."/>
            <person name="Despons L."/>
            <person name="Fabre E."/>
            <person name="Fairhead C."/>
            <person name="Ferry-Dumazet H."/>
            <person name="Groppi A."/>
            <person name="Hantraye F."/>
            <person name="Hennequin C."/>
            <person name="Jauniaux N."/>
            <person name="Joyet P."/>
            <person name="Kachouri R."/>
            <person name="Kerrest A."/>
            <person name="Koszul R."/>
            <person name="Lemaire M."/>
            <person name="Lesur I."/>
            <person name="Ma L."/>
            <person name="Muller H."/>
            <person name="Nicaud J.-M."/>
            <person name="Nikolski M."/>
            <person name="Oztas S."/>
            <person name="Ozier-Kalogeropoulos O."/>
            <person name="Pellenz S."/>
            <person name="Potier S."/>
            <person name="Richard G.-F."/>
            <person name="Straub M.-L."/>
            <person name="Suleau A."/>
            <person name="Swennen D."/>
            <person name="Tekaia F."/>
            <person name="Wesolowski-Louvel M."/>
            <person name="Westhof E."/>
            <person name="Wirth B."/>
            <person name="Zeniou-Meyer M."/>
            <person name="Zivanovic Y."/>
            <person name="Bolotin-Fukuhara M."/>
            <person name="Thierry A."/>
            <person name="Bouchier C."/>
            <person name="Caudron B."/>
            <person name="Scarpelli C."/>
            <person name="Gaillardin C."/>
            <person name="Weissenbach J."/>
            <person name="Wincker P."/>
            <person name="Souciet J.-L."/>
        </authorList>
    </citation>
    <scope>NUCLEOTIDE SEQUENCE [LARGE SCALE GENOMIC DNA]</scope>
    <source>
        <strain>ATCC 2001 / BCRC 20586 / JCM 3761 / NBRC 0622 / NRRL Y-65 / CBS 138</strain>
    </source>
</reference>
<feature type="chain" id="PRO_0000193532" description="Cytochrome b-c1 complex subunit 7">
    <location>
        <begin position="1"/>
        <end position="128"/>
    </location>
</feature>
<name>QCR7_CANGA</name>
<comment type="function">
    <text evidence="1">Component of the ubiquinol-cytochrome c oxidoreductase, a multisubunit transmembrane complex that is part of the mitochondrial electron transport chain which drives oxidative phosphorylation. The respiratory chain contains 3 multisubunit complexes succinate dehydrogenase (complex II, CII), ubiquinol-cytochrome c oxidoreductase (cytochrome b-c1 complex, complex III, CIII) and cytochrome c oxidase (complex IV, CIV), that cooperate to transfer electrons derived from NADH and succinate to molecular oxygen, creating an electrochemical gradient over the inner membrane that drives transmembrane transport and the ATP synthase. The cytochrome b-c1 complex catalyzes electron transfer from ubiquinol to cytochrome c, linking this redox reaction to translocation of protons across the mitochondrial inner membrane, with protons being carried across the membrane as hydrogens on the quinol. In the process called Q cycle, 2 protons are consumed from the matrix, 4 protons are released into the intermembrane space and 2 electrons are passed to cytochrome c.</text>
</comment>
<comment type="subunit">
    <text evidence="1">Component of the ubiquinol-cytochrome c oxidoreductase (cytochrome b-c1 complex, complex III, CIII), a multisubunit enzyme composed of 3 respiratory subunits cytochrome b, cytochrome c1 and Rieske protein, 2 core protein subunits, and additional low-molecular weight protein subunits. The complex exists as an obligatory dimer and forms supercomplexes (SCs) in the inner mitochondrial membrane with cytochrome c oxidase (complex IV, CIV).</text>
</comment>
<comment type="subcellular location">
    <subcellularLocation>
        <location evidence="1">Mitochondrion inner membrane</location>
        <topology evidence="1">Peripheral membrane protein</topology>
        <orientation evidence="1">Matrix side</orientation>
    </subcellularLocation>
</comment>
<comment type="similarity">
    <text evidence="2">Belongs to the UQCRB/QCR7 family.</text>
</comment>
<accession>Q6FSJ2</accession>
<protein>
    <recommendedName>
        <fullName>Cytochrome b-c1 complex subunit 7</fullName>
    </recommendedName>
    <alternativeName>
        <fullName>Complex III subunit 7</fullName>
    </alternativeName>
    <alternativeName>
        <fullName>Complex III subunit VII</fullName>
    </alternativeName>
    <alternativeName>
        <fullName>Ubiquinol-cytochrome c reductase complex 14 kDa protein</fullName>
    </alternativeName>
</protein>
<keyword id="KW-0249">Electron transport</keyword>
<keyword id="KW-0472">Membrane</keyword>
<keyword id="KW-0496">Mitochondrion</keyword>
<keyword id="KW-0999">Mitochondrion inner membrane</keyword>
<keyword id="KW-1185">Reference proteome</keyword>
<keyword id="KW-0679">Respiratory chain</keyword>
<keyword id="KW-0813">Transport</keyword>
<gene>
    <name type="primary">QCR7</name>
    <name type="ordered locus">CAGL0G10153g</name>
</gene>
<dbReference type="EMBL" id="CR380953">
    <property type="protein sequence ID" value="CAG59729.1"/>
    <property type="molecule type" value="Genomic_DNA"/>
</dbReference>
<dbReference type="RefSeq" id="XP_446802.1">
    <property type="nucleotide sequence ID" value="XM_446802.1"/>
</dbReference>
<dbReference type="SMR" id="Q6FSJ2"/>
<dbReference type="FunCoup" id="Q6FSJ2">
    <property type="interactions" value="235"/>
</dbReference>
<dbReference type="STRING" id="284593.Q6FSJ2"/>
<dbReference type="EnsemblFungi" id="CAGL0G10153g-T">
    <property type="protein sequence ID" value="CAGL0G10153g-T-p1"/>
    <property type="gene ID" value="CAGL0G10153g"/>
</dbReference>
<dbReference type="KEGG" id="cgr:2888000"/>
<dbReference type="CGD" id="CAL0129153">
    <property type="gene designation" value="CAGL0G10153g"/>
</dbReference>
<dbReference type="VEuPathDB" id="FungiDB:B1J91_G10153g"/>
<dbReference type="VEuPathDB" id="FungiDB:CAGL0G10153g"/>
<dbReference type="eggNOG" id="KOG3440">
    <property type="taxonomic scope" value="Eukaryota"/>
</dbReference>
<dbReference type="HOGENOM" id="CLU_115154_1_0_1"/>
<dbReference type="InParanoid" id="Q6FSJ2"/>
<dbReference type="Proteomes" id="UP000002428">
    <property type="component" value="Chromosome G"/>
</dbReference>
<dbReference type="GO" id="GO:0099617">
    <property type="term" value="C:matrix side of mitochondrial inner membrane"/>
    <property type="evidence" value="ECO:0007669"/>
    <property type="project" value="EnsemblFungi"/>
</dbReference>
<dbReference type="GO" id="GO:0045275">
    <property type="term" value="C:respiratory chain complex III"/>
    <property type="evidence" value="ECO:0007669"/>
    <property type="project" value="EnsemblFungi"/>
</dbReference>
<dbReference type="GO" id="GO:0008121">
    <property type="term" value="F:ubiquinol-cytochrome-c reductase activity"/>
    <property type="evidence" value="ECO:0007669"/>
    <property type="project" value="EnsemblFungi"/>
</dbReference>
<dbReference type="GO" id="GO:0006122">
    <property type="term" value="P:mitochondrial electron transport, ubiquinol to cytochrome c"/>
    <property type="evidence" value="ECO:0007669"/>
    <property type="project" value="EnsemblFungi"/>
</dbReference>
<dbReference type="GO" id="GO:0034551">
    <property type="term" value="P:mitochondrial respiratory chain complex III assembly"/>
    <property type="evidence" value="ECO:0007669"/>
    <property type="project" value="EnsemblFungi"/>
</dbReference>
<dbReference type="FunFam" id="1.10.1090.10:FF:000001">
    <property type="entry name" value="Cytochrome b-c1 complex subunit 7"/>
    <property type="match status" value="1"/>
</dbReference>
<dbReference type="Gene3D" id="1.10.1090.10">
    <property type="entry name" value="Cytochrome b-c1 complex subunit 7"/>
    <property type="match status" value="1"/>
</dbReference>
<dbReference type="InterPro" id="IPR003197">
    <property type="entry name" value="QCR7"/>
</dbReference>
<dbReference type="InterPro" id="IPR036544">
    <property type="entry name" value="QCR7_sf"/>
</dbReference>
<dbReference type="PANTHER" id="PTHR12022:SF0">
    <property type="entry name" value="CYTOCHROME B-C1 COMPLEX SUBUNIT 7"/>
    <property type="match status" value="1"/>
</dbReference>
<dbReference type="PANTHER" id="PTHR12022">
    <property type="entry name" value="UBIQUINOL-CYTOCHROME C REDUCTASE COMPLEX 14 KD PROTEIN"/>
    <property type="match status" value="1"/>
</dbReference>
<dbReference type="Pfam" id="PF02271">
    <property type="entry name" value="UCR_14kD"/>
    <property type="match status" value="1"/>
</dbReference>
<dbReference type="PIRSF" id="PIRSF000022">
    <property type="entry name" value="Bc1_14K"/>
    <property type="match status" value="1"/>
</dbReference>
<dbReference type="SUPFAM" id="SSF81524">
    <property type="entry name" value="14 kDa protein of cytochrome bc1 complex (Ubiquinol-cytochrome c reductase)"/>
    <property type="match status" value="1"/>
</dbReference>